<proteinExistence type="inferred from homology"/>
<gene>
    <name type="primary">pbsA</name>
</gene>
<accession>P51271</accession>
<feature type="chain" id="PRO_0000209699" description="Heme oxygenase">
    <location>
        <begin position="1"/>
        <end position="236"/>
    </location>
</feature>
<feature type="binding site" description="axial binding residue" evidence="1">
    <location>
        <position position="17"/>
    </location>
    <ligand>
        <name>heme b</name>
        <dbReference type="ChEBI" id="CHEBI:60344"/>
    </ligand>
    <ligandPart>
        <name>Fe</name>
        <dbReference type="ChEBI" id="CHEBI:18248"/>
    </ligandPart>
</feature>
<geneLocation type="chloroplast"/>
<sequence>MVSSLANELREGTTKSHSMAENVSFVKSFLGGVVDKKSYRKLIANLYFVYSAIEEEILLNKDHPAIKPIYFTELNRKTSLAKDLNYYYGPDWLNIIEPSSATQVYVNRIHNIGNKQPELLVAHAYTRYLGDLSGGQVLKKIARGAMNLSDERGTKFYDFDEIEDDKIFKNNYRSALDTIPLSDEQVQNVVAEANISFTLNMKMFEELNSSIVKIITMIIVSTVRKFTLKSILATAD</sequence>
<name>HO_PORPU</name>
<dbReference type="EC" id="1.14.14.18" evidence="2"/>
<dbReference type="EMBL" id="U38804">
    <property type="protein sequence ID" value="AAC08157.1"/>
    <property type="molecule type" value="Genomic_DNA"/>
</dbReference>
<dbReference type="PIR" id="S73192">
    <property type="entry name" value="S73192"/>
</dbReference>
<dbReference type="RefSeq" id="NP_053881.1">
    <property type="nucleotide sequence ID" value="NC_000925.1"/>
</dbReference>
<dbReference type="SMR" id="P51271"/>
<dbReference type="GeneID" id="809900"/>
<dbReference type="GO" id="GO:0009507">
    <property type="term" value="C:chloroplast"/>
    <property type="evidence" value="ECO:0007669"/>
    <property type="project" value="UniProtKB-SubCell"/>
</dbReference>
<dbReference type="GO" id="GO:0020037">
    <property type="term" value="F:heme binding"/>
    <property type="evidence" value="ECO:0007669"/>
    <property type="project" value="TreeGrafter"/>
</dbReference>
<dbReference type="GO" id="GO:0004392">
    <property type="term" value="F:heme oxygenase (decyclizing) activity"/>
    <property type="evidence" value="ECO:0007669"/>
    <property type="project" value="UniProtKB-EC"/>
</dbReference>
<dbReference type="GO" id="GO:0046872">
    <property type="term" value="F:metal ion binding"/>
    <property type="evidence" value="ECO:0007669"/>
    <property type="project" value="UniProtKB-KW"/>
</dbReference>
<dbReference type="GO" id="GO:0042167">
    <property type="term" value="P:heme catabolic process"/>
    <property type="evidence" value="ECO:0007669"/>
    <property type="project" value="TreeGrafter"/>
</dbReference>
<dbReference type="GO" id="GO:0006788">
    <property type="term" value="P:heme oxidation"/>
    <property type="evidence" value="ECO:0007669"/>
    <property type="project" value="InterPro"/>
</dbReference>
<dbReference type="GO" id="GO:0015979">
    <property type="term" value="P:photosynthesis"/>
    <property type="evidence" value="ECO:0007669"/>
    <property type="project" value="UniProtKB-KW"/>
</dbReference>
<dbReference type="GO" id="GO:0006979">
    <property type="term" value="P:response to oxidative stress"/>
    <property type="evidence" value="ECO:0007669"/>
    <property type="project" value="TreeGrafter"/>
</dbReference>
<dbReference type="CDD" id="cd19165">
    <property type="entry name" value="HemeO"/>
    <property type="match status" value="1"/>
</dbReference>
<dbReference type="FunFam" id="1.20.910.10:FF:000001">
    <property type="entry name" value="Heme oxygenase 1"/>
    <property type="match status" value="1"/>
</dbReference>
<dbReference type="Gene3D" id="1.20.910.10">
    <property type="entry name" value="Heme oxygenase-like"/>
    <property type="match status" value="1"/>
</dbReference>
<dbReference type="InterPro" id="IPR002051">
    <property type="entry name" value="Haem_Oase"/>
</dbReference>
<dbReference type="InterPro" id="IPR016053">
    <property type="entry name" value="Haem_Oase-like"/>
</dbReference>
<dbReference type="InterPro" id="IPR016084">
    <property type="entry name" value="Haem_Oase-like_multi-hlx"/>
</dbReference>
<dbReference type="InterPro" id="IPR018207">
    <property type="entry name" value="Haem_oxygenase_CS"/>
</dbReference>
<dbReference type="PANTHER" id="PTHR10720">
    <property type="entry name" value="HEME OXYGENASE"/>
    <property type="match status" value="1"/>
</dbReference>
<dbReference type="PANTHER" id="PTHR10720:SF0">
    <property type="entry name" value="HEME OXYGENASE"/>
    <property type="match status" value="1"/>
</dbReference>
<dbReference type="Pfam" id="PF01126">
    <property type="entry name" value="Heme_oxygenase"/>
    <property type="match status" value="1"/>
</dbReference>
<dbReference type="PIRSF" id="PIRSF000343">
    <property type="entry name" value="Haem_Oase"/>
    <property type="match status" value="1"/>
</dbReference>
<dbReference type="PRINTS" id="PR00088">
    <property type="entry name" value="HAEMOXYGNASE"/>
</dbReference>
<dbReference type="SUPFAM" id="SSF48613">
    <property type="entry name" value="Heme oxygenase-like"/>
    <property type="match status" value="1"/>
</dbReference>
<dbReference type="PROSITE" id="PS00593">
    <property type="entry name" value="HEME_OXYGENASE"/>
    <property type="match status" value="1"/>
</dbReference>
<protein>
    <recommendedName>
        <fullName>Heme oxygenase</fullName>
        <ecNumber evidence="2">1.14.14.18</ecNumber>
    </recommendedName>
</protein>
<comment type="function">
    <text evidence="1">Catalyzes the opening of the heme ring with the release of iron. Key enzyme in the synthesis of the chromophoric part of the photosynthetic antennae.</text>
</comment>
<comment type="catalytic activity">
    <reaction evidence="2">
        <text>heme b + 3 reduced [NADPH--hemoprotein reductase] + 3 O2 = biliverdin IXalpha + CO + Fe(2+) + 3 oxidized [NADPH--hemoprotein reductase] + 3 H2O + H(+)</text>
        <dbReference type="Rhea" id="RHEA:21764"/>
        <dbReference type="Rhea" id="RHEA-COMP:11964"/>
        <dbReference type="Rhea" id="RHEA-COMP:11965"/>
        <dbReference type="ChEBI" id="CHEBI:15377"/>
        <dbReference type="ChEBI" id="CHEBI:15378"/>
        <dbReference type="ChEBI" id="CHEBI:15379"/>
        <dbReference type="ChEBI" id="CHEBI:17245"/>
        <dbReference type="ChEBI" id="CHEBI:29033"/>
        <dbReference type="ChEBI" id="CHEBI:57618"/>
        <dbReference type="ChEBI" id="CHEBI:57991"/>
        <dbReference type="ChEBI" id="CHEBI:58210"/>
        <dbReference type="ChEBI" id="CHEBI:60344"/>
        <dbReference type="EC" id="1.14.14.18"/>
    </reaction>
</comment>
<comment type="subcellular location">
    <subcellularLocation>
        <location>Plastid</location>
        <location>Chloroplast</location>
    </subcellularLocation>
</comment>
<comment type="similarity">
    <text evidence="3">Belongs to the heme oxygenase family.</text>
</comment>
<evidence type="ECO:0000250" key="1"/>
<evidence type="ECO:0000250" key="2">
    <source>
        <dbReference type="UniProtKB" id="O48782"/>
    </source>
</evidence>
<evidence type="ECO:0000305" key="3"/>
<organism>
    <name type="scientific">Porphyra purpurea</name>
    <name type="common">Red seaweed</name>
    <name type="synonym">Ulva purpurea</name>
    <dbReference type="NCBI Taxonomy" id="2787"/>
    <lineage>
        <taxon>Eukaryota</taxon>
        <taxon>Rhodophyta</taxon>
        <taxon>Bangiophyceae</taxon>
        <taxon>Bangiales</taxon>
        <taxon>Bangiaceae</taxon>
        <taxon>Porphyra</taxon>
    </lineage>
</organism>
<keyword id="KW-0150">Chloroplast</keyword>
<keyword id="KW-0349">Heme</keyword>
<keyword id="KW-0408">Iron</keyword>
<keyword id="KW-0479">Metal-binding</keyword>
<keyword id="KW-0560">Oxidoreductase</keyword>
<keyword id="KW-0602">Photosynthesis</keyword>
<keyword id="KW-0934">Plastid</keyword>
<reference key="1">
    <citation type="journal article" date="1995" name="Plant Mol. Biol. Rep.">
        <title>Complete nucleotide sequence of the Porphyra purpurea chloroplast genome.</title>
        <authorList>
            <person name="Reith M.E."/>
            <person name="Munholland J."/>
        </authorList>
    </citation>
    <scope>NUCLEOTIDE SEQUENCE [LARGE SCALE GENOMIC DNA]</scope>
    <source>
        <strain>Avonport</strain>
    </source>
</reference>